<protein>
    <recommendedName>
        <fullName evidence="4">Lipoate--protein ligase 1</fullName>
        <ecNumber evidence="3">6.3.1.20</ecNumber>
    </recommendedName>
    <alternativeName>
        <fullName evidence="4">LplA1</fullName>
    </alternativeName>
</protein>
<feature type="chain" id="PRO_0000435346" description="Lipoate--protein ligase 1">
    <location>
        <begin position="1"/>
        <end position="328"/>
    </location>
</feature>
<feature type="domain" description="BPL/LPL catalytic" evidence="2">
    <location>
        <begin position="27"/>
        <end position="214"/>
    </location>
</feature>
<feature type="binding site" evidence="1">
    <location>
        <position position="69"/>
    </location>
    <ligand>
        <name>ATP</name>
        <dbReference type="ChEBI" id="CHEBI:30616"/>
    </ligand>
</feature>
<feature type="binding site" evidence="1">
    <location>
        <begin position="74"/>
        <end position="77"/>
    </location>
    <ligand>
        <name>ATP</name>
        <dbReference type="ChEBI" id="CHEBI:30616"/>
    </ligand>
</feature>
<feature type="binding site" evidence="1">
    <location>
        <position position="131"/>
    </location>
    <ligand>
        <name>(R)-lipoate</name>
        <dbReference type="ChEBI" id="CHEBI:83088"/>
    </ligand>
</feature>
<feature type="binding site" evidence="1">
    <location>
        <position position="131"/>
    </location>
    <ligand>
        <name>ATP</name>
        <dbReference type="ChEBI" id="CHEBI:30616"/>
    </ligand>
</feature>
<dbReference type="EC" id="6.3.1.20" evidence="3"/>
<dbReference type="EMBL" id="BA000017">
    <property type="protein sequence ID" value="BAB57190.1"/>
    <property type="molecule type" value="Genomic_DNA"/>
</dbReference>
<dbReference type="RefSeq" id="WP_000668818.1">
    <property type="nucleotide sequence ID" value="NC_002758.2"/>
</dbReference>
<dbReference type="SMR" id="A0A0H3JR16"/>
<dbReference type="KEGG" id="sav:SAV1028"/>
<dbReference type="HOGENOM" id="CLU_022986_0_2_9"/>
<dbReference type="PhylomeDB" id="A0A0H3JR16"/>
<dbReference type="UniPathway" id="UPA00537">
    <property type="reaction ID" value="UER00594"/>
</dbReference>
<dbReference type="UniPathway" id="UPA00537">
    <property type="reaction ID" value="UER00595"/>
</dbReference>
<dbReference type="Proteomes" id="UP000002481">
    <property type="component" value="Chromosome"/>
</dbReference>
<dbReference type="GO" id="GO:0005737">
    <property type="term" value="C:cytoplasm"/>
    <property type="evidence" value="ECO:0007669"/>
    <property type="project" value="TreeGrafter"/>
</dbReference>
<dbReference type="GO" id="GO:0005524">
    <property type="term" value="F:ATP binding"/>
    <property type="evidence" value="ECO:0007669"/>
    <property type="project" value="UniProtKB-KW"/>
</dbReference>
<dbReference type="GO" id="GO:0016979">
    <property type="term" value="F:lipoate-protein ligase activity"/>
    <property type="evidence" value="ECO:0000314"/>
    <property type="project" value="UniProtKB"/>
</dbReference>
<dbReference type="GO" id="GO:0017118">
    <property type="term" value="F:lipoyltransferase activity"/>
    <property type="evidence" value="ECO:0007669"/>
    <property type="project" value="TreeGrafter"/>
</dbReference>
<dbReference type="GO" id="GO:0009249">
    <property type="term" value="P:protein lipoylation"/>
    <property type="evidence" value="ECO:0000314"/>
    <property type="project" value="UniProtKB"/>
</dbReference>
<dbReference type="CDD" id="cd16443">
    <property type="entry name" value="LplA"/>
    <property type="match status" value="1"/>
</dbReference>
<dbReference type="FunFam" id="3.30.930.10:FF:000072">
    <property type="entry name" value="Lipoate--protein ligase"/>
    <property type="match status" value="1"/>
</dbReference>
<dbReference type="Gene3D" id="3.30.930.10">
    <property type="entry name" value="Bira Bifunctional Protein, Domain 2"/>
    <property type="match status" value="1"/>
</dbReference>
<dbReference type="Gene3D" id="3.30.390.50">
    <property type="entry name" value="CO dehydrogenase flavoprotein, C-terminal domain"/>
    <property type="match status" value="1"/>
</dbReference>
<dbReference type="InterPro" id="IPR045864">
    <property type="entry name" value="aa-tRNA-synth_II/BPL/LPL"/>
</dbReference>
<dbReference type="InterPro" id="IPR004143">
    <property type="entry name" value="BPL_LPL_catalytic"/>
</dbReference>
<dbReference type="InterPro" id="IPR019491">
    <property type="entry name" value="Lipoate_protein_ligase_C"/>
</dbReference>
<dbReference type="InterPro" id="IPR004562">
    <property type="entry name" value="LipoylTrfase_LipoateP_Ligase"/>
</dbReference>
<dbReference type="NCBIfam" id="TIGR00545">
    <property type="entry name" value="lipoyltrans"/>
    <property type="match status" value="1"/>
</dbReference>
<dbReference type="PANTHER" id="PTHR12561">
    <property type="entry name" value="LIPOATE-PROTEIN LIGASE"/>
    <property type="match status" value="1"/>
</dbReference>
<dbReference type="PANTHER" id="PTHR12561:SF3">
    <property type="entry name" value="LIPOYLTRANSFERASE 1, MITOCHONDRIAL"/>
    <property type="match status" value="1"/>
</dbReference>
<dbReference type="Pfam" id="PF10437">
    <property type="entry name" value="Lip_prot_lig_C"/>
    <property type="match status" value="1"/>
</dbReference>
<dbReference type="Pfam" id="PF21948">
    <property type="entry name" value="LplA-B_cat"/>
    <property type="match status" value="1"/>
</dbReference>
<dbReference type="SUPFAM" id="SSF55681">
    <property type="entry name" value="Class II aaRS and biotin synthetases"/>
    <property type="match status" value="1"/>
</dbReference>
<dbReference type="SUPFAM" id="SSF82649">
    <property type="entry name" value="SufE/NifU"/>
    <property type="match status" value="1"/>
</dbReference>
<dbReference type="PROSITE" id="PS51733">
    <property type="entry name" value="BPL_LPL_CATALYTIC"/>
    <property type="match status" value="1"/>
</dbReference>
<gene>
    <name evidence="6" type="ordered locus">SAV1028</name>
</gene>
<reference key="1">
    <citation type="journal article" date="2001" name="Lancet">
        <title>Whole genome sequencing of meticillin-resistant Staphylococcus aureus.</title>
        <authorList>
            <person name="Kuroda M."/>
            <person name="Ohta T."/>
            <person name="Uchiyama I."/>
            <person name="Baba T."/>
            <person name="Yuzawa H."/>
            <person name="Kobayashi I."/>
            <person name="Cui L."/>
            <person name="Oguchi A."/>
            <person name="Aoki K."/>
            <person name="Nagai Y."/>
            <person name="Lian J.-Q."/>
            <person name="Ito T."/>
            <person name="Kanamori M."/>
            <person name="Matsumaru H."/>
            <person name="Maruyama A."/>
            <person name="Murakami H."/>
            <person name="Hosoyama A."/>
            <person name="Mizutani-Ui Y."/>
            <person name="Takahashi N.K."/>
            <person name="Sawano T."/>
            <person name="Inoue R."/>
            <person name="Kaito C."/>
            <person name="Sekimizu K."/>
            <person name="Hirakawa H."/>
            <person name="Kuhara S."/>
            <person name="Goto S."/>
            <person name="Yabuzaki J."/>
            <person name="Kanehisa M."/>
            <person name="Yamashita A."/>
            <person name="Oshima K."/>
            <person name="Furuya K."/>
            <person name="Yoshino C."/>
            <person name="Shiba T."/>
            <person name="Hattori M."/>
            <person name="Ogasawara N."/>
            <person name="Hayashi H."/>
            <person name="Hiramatsu K."/>
        </authorList>
    </citation>
    <scope>NUCLEOTIDE SEQUENCE [LARGE SCALE GENOMIC DNA]</scope>
    <source>
        <strain evidence="7">Mu50 / ATCC 700699</strain>
    </source>
</reference>
<reference key="2">
    <citation type="journal article" date="2015" name="Mol. Cell">
        <title>Identification of a class of protein ADP-ribosylating sirtuins in microbial pathogens.</title>
        <authorList>
            <person name="Rack J.G."/>
            <person name="Morra R."/>
            <person name="Barkauskaite E."/>
            <person name="Kraehenbuehl R."/>
            <person name="Ariza A."/>
            <person name="Qu Y."/>
            <person name="Ortmayer M."/>
            <person name="Leidecker O."/>
            <person name="Cameron D.R."/>
            <person name="Matic I."/>
            <person name="Peleg A.Y."/>
            <person name="Leys D."/>
            <person name="Traven A."/>
            <person name="Ahel I."/>
        </authorList>
    </citation>
    <scope>FUNCTION</scope>
    <scope>CATALYTIC ACTIVITY</scope>
    <source>
        <strain>Mu50 / ATCC 700699</strain>
    </source>
</reference>
<organism>
    <name type="scientific">Staphylococcus aureus (strain Mu50 / ATCC 700699)</name>
    <dbReference type="NCBI Taxonomy" id="158878"/>
    <lineage>
        <taxon>Bacteria</taxon>
        <taxon>Bacillati</taxon>
        <taxon>Bacillota</taxon>
        <taxon>Bacilli</taxon>
        <taxon>Bacillales</taxon>
        <taxon>Staphylococcaceae</taxon>
        <taxon>Staphylococcus</taxon>
    </lineage>
</organism>
<proteinExistence type="evidence at protein level"/>
<name>LPLA1_STAAM</name>
<keyword id="KW-0067">ATP-binding</keyword>
<keyword id="KW-0436">Ligase</keyword>
<keyword id="KW-0547">Nucleotide-binding</keyword>
<sequence>MKFISNNNITDPTLNLAMEEYVLKNLPAEESYFLFYINRPSIIVGKNQNTIEEVNQTYIDAHNIDVVRRISGGGAVYHDTGNLNFSFITDDDGNSFHNFQKFTEPIVQALQSLGVNAELTGRNDIQVGQAKISGNAMVKVKNRMFSHGTLMLNSDLDEVQNALKVNPAKIKSKGIKSVRKRVANIQEFLNDPLEIEEFKKIILKTIFGETEVEEYKLTDEDWENIEKLSNDKYRTWAWNYGRNPKYNFEREEKFEKGFVQIKFDVKRGKIEHAKIFGDFFGVGDVTDLENALVGCLHDFEHIEEALSEYDLYHYFGDIDRHELIRLMS</sequence>
<evidence type="ECO:0000250" key="1">
    <source>
        <dbReference type="UniProtKB" id="Q9HKT1"/>
    </source>
</evidence>
<evidence type="ECO:0000255" key="2">
    <source>
        <dbReference type="PROSITE-ProRule" id="PRU01067"/>
    </source>
</evidence>
<evidence type="ECO:0000269" key="3">
    <source>
    </source>
</evidence>
<evidence type="ECO:0000303" key="4">
    <source>
    </source>
</evidence>
<evidence type="ECO:0000305" key="5">
    <source>
    </source>
</evidence>
<evidence type="ECO:0000312" key="6">
    <source>
        <dbReference type="EMBL" id="BAB57190.1"/>
    </source>
</evidence>
<evidence type="ECO:0000312" key="7">
    <source>
        <dbReference type="Proteomes" id="UP000002481"/>
    </source>
</evidence>
<accession>A0A0H3JR16</accession>
<comment type="function">
    <text evidence="3">Catalyzes the lipoylation of proteins, such as GcvH (SAV0833) and GcvH-L (SAV0324), likely via the ATP-dependent activation of lipoate to lipoyl-AMP and the transfer of the activated lipoyl onto the lipoyl domain of the target protein.</text>
</comment>
<comment type="catalytic activity">
    <reaction evidence="3">
        <text>L-lysyl-[lipoyl-carrier protein] + (R)-lipoate + ATP = N(6)-[(R)-lipoyl]-L-lysyl-[lipoyl-carrier protein] + AMP + diphosphate + H(+)</text>
        <dbReference type="Rhea" id="RHEA:49288"/>
        <dbReference type="Rhea" id="RHEA-COMP:10500"/>
        <dbReference type="Rhea" id="RHEA-COMP:10502"/>
        <dbReference type="ChEBI" id="CHEBI:15378"/>
        <dbReference type="ChEBI" id="CHEBI:29969"/>
        <dbReference type="ChEBI" id="CHEBI:30616"/>
        <dbReference type="ChEBI" id="CHEBI:33019"/>
        <dbReference type="ChEBI" id="CHEBI:83088"/>
        <dbReference type="ChEBI" id="CHEBI:83099"/>
        <dbReference type="ChEBI" id="CHEBI:456215"/>
        <dbReference type="EC" id="6.3.1.20"/>
    </reaction>
</comment>
<comment type="pathway">
    <text evidence="5">Protein modification; protein lipoylation via exogenous pathway; protein N(6)-(lipoyl)lysine from lipoate: step 1/2.</text>
</comment>
<comment type="pathway">
    <text evidence="5">Protein modification; protein lipoylation via exogenous pathway; protein N(6)-(lipoyl)lysine from lipoate: step 2/2.</text>
</comment>